<proteinExistence type="inferred from homology"/>
<keyword id="KW-0067">ATP-binding</keyword>
<keyword id="KW-1003">Cell membrane</keyword>
<keyword id="KW-0418">Kinase</keyword>
<keyword id="KW-0472">Membrane</keyword>
<keyword id="KW-0547">Nucleotide-binding</keyword>
<keyword id="KW-0597">Phosphoprotein</keyword>
<keyword id="KW-0808">Transferase</keyword>
<keyword id="KW-0812">Transmembrane</keyword>
<keyword id="KW-1133">Transmembrane helix</keyword>
<keyword id="KW-0902">Two-component regulatory system</keyword>
<keyword id="KW-0843">Virulence</keyword>
<organism>
    <name type="scientific">Staphylococcus aureus (strain JH1)</name>
    <dbReference type="NCBI Taxonomy" id="359787"/>
    <lineage>
        <taxon>Bacteria</taxon>
        <taxon>Bacillati</taxon>
        <taxon>Bacillota</taxon>
        <taxon>Bacilli</taxon>
        <taxon>Bacillales</taxon>
        <taxon>Staphylococcaceae</taxon>
        <taxon>Staphylococcus</taxon>
    </lineage>
</organism>
<evidence type="ECO:0000250" key="1"/>
<evidence type="ECO:0000255" key="2"/>
<evidence type="ECO:0000255" key="3">
    <source>
        <dbReference type="PROSITE-ProRule" id="PRU00102"/>
    </source>
</evidence>
<evidence type="ECO:0000255" key="4">
    <source>
        <dbReference type="PROSITE-ProRule" id="PRU00107"/>
    </source>
</evidence>
<gene>
    <name type="primary">hssS</name>
    <name type="ordered locus">SaurJH1_2432</name>
</gene>
<protein>
    <recommendedName>
        <fullName>Heme sensor protein HssS</fullName>
        <ecNumber>2.7.13.3</ecNumber>
    </recommendedName>
</protein>
<dbReference type="EC" id="2.7.13.3"/>
<dbReference type="EMBL" id="CP000736">
    <property type="protein sequence ID" value="ABR53257.1"/>
    <property type="molecule type" value="Genomic_DNA"/>
</dbReference>
<dbReference type="SMR" id="A6U489"/>
<dbReference type="KEGG" id="sah:SaurJH1_2432"/>
<dbReference type="HOGENOM" id="CLU_000445_89_6_9"/>
<dbReference type="GO" id="GO:0005886">
    <property type="term" value="C:plasma membrane"/>
    <property type="evidence" value="ECO:0007669"/>
    <property type="project" value="UniProtKB-SubCell"/>
</dbReference>
<dbReference type="GO" id="GO:0005524">
    <property type="term" value="F:ATP binding"/>
    <property type="evidence" value="ECO:0007669"/>
    <property type="project" value="UniProtKB-KW"/>
</dbReference>
<dbReference type="GO" id="GO:0000155">
    <property type="term" value="F:phosphorelay sensor kinase activity"/>
    <property type="evidence" value="ECO:0007669"/>
    <property type="project" value="InterPro"/>
</dbReference>
<dbReference type="CDD" id="cd06225">
    <property type="entry name" value="HAMP"/>
    <property type="match status" value="1"/>
</dbReference>
<dbReference type="CDD" id="cd00082">
    <property type="entry name" value="HisKA"/>
    <property type="match status" value="1"/>
</dbReference>
<dbReference type="FunFam" id="3.30.565.10:FF:000090">
    <property type="entry name" value="Heme sensor histidine kinase HssS"/>
    <property type="match status" value="1"/>
</dbReference>
<dbReference type="Gene3D" id="1.10.287.130">
    <property type="match status" value="1"/>
</dbReference>
<dbReference type="Gene3D" id="6.10.340.10">
    <property type="match status" value="1"/>
</dbReference>
<dbReference type="Gene3D" id="3.30.565.10">
    <property type="entry name" value="Histidine kinase-like ATPase, C-terminal domain"/>
    <property type="match status" value="1"/>
</dbReference>
<dbReference type="InterPro" id="IPR050398">
    <property type="entry name" value="Bact_Sensor_His_Kinase"/>
</dbReference>
<dbReference type="InterPro" id="IPR003660">
    <property type="entry name" value="HAMP_dom"/>
</dbReference>
<dbReference type="InterPro" id="IPR036890">
    <property type="entry name" value="HATPase_C_sf"/>
</dbReference>
<dbReference type="InterPro" id="IPR005467">
    <property type="entry name" value="His_kinase_dom"/>
</dbReference>
<dbReference type="InterPro" id="IPR003661">
    <property type="entry name" value="HisK_dim/P_dom"/>
</dbReference>
<dbReference type="InterPro" id="IPR036097">
    <property type="entry name" value="HisK_dim/P_sf"/>
</dbReference>
<dbReference type="InterPro" id="IPR004358">
    <property type="entry name" value="Sig_transdc_His_kin-like_C"/>
</dbReference>
<dbReference type="PANTHER" id="PTHR45528:SF11">
    <property type="entry name" value="HISTIDINE KINASE"/>
    <property type="match status" value="1"/>
</dbReference>
<dbReference type="PANTHER" id="PTHR45528">
    <property type="entry name" value="SENSOR HISTIDINE KINASE CPXA"/>
    <property type="match status" value="1"/>
</dbReference>
<dbReference type="Pfam" id="PF00672">
    <property type="entry name" value="HAMP"/>
    <property type="match status" value="1"/>
</dbReference>
<dbReference type="Pfam" id="PF02518">
    <property type="entry name" value="HATPase_c"/>
    <property type="match status" value="1"/>
</dbReference>
<dbReference type="Pfam" id="PF00512">
    <property type="entry name" value="HisKA"/>
    <property type="match status" value="1"/>
</dbReference>
<dbReference type="PRINTS" id="PR00344">
    <property type="entry name" value="BCTRLSENSOR"/>
</dbReference>
<dbReference type="SMART" id="SM00304">
    <property type="entry name" value="HAMP"/>
    <property type="match status" value="1"/>
</dbReference>
<dbReference type="SMART" id="SM00387">
    <property type="entry name" value="HATPase_c"/>
    <property type="match status" value="1"/>
</dbReference>
<dbReference type="SMART" id="SM00388">
    <property type="entry name" value="HisKA"/>
    <property type="match status" value="1"/>
</dbReference>
<dbReference type="SUPFAM" id="SSF55874">
    <property type="entry name" value="ATPase domain of HSP90 chaperone/DNA topoisomerase II/histidine kinase"/>
    <property type="match status" value="1"/>
</dbReference>
<dbReference type="SUPFAM" id="SSF158472">
    <property type="entry name" value="HAMP domain-like"/>
    <property type="match status" value="1"/>
</dbReference>
<dbReference type="SUPFAM" id="SSF47384">
    <property type="entry name" value="Homodimeric domain of signal transducing histidine kinase"/>
    <property type="match status" value="1"/>
</dbReference>
<dbReference type="PROSITE" id="PS50885">
    <property type="entry name" value="HAMP"/>
    <property type="match status" value="1"/>
</dbReference>
<dbReference type="PROSITE" id="PS50109">
    <property type="entry name" value="HIS_KIN"/>
    <property type="match status" value="1"/>
</dbReference>
<reference key="1">
    <citation type="submission" date="2007-06" db="EMBL/GenBank/DDBJ databases">
        <title>Complete sequence of chromosome of Staphylococcus aureus subsp. aureus JH1.</title>
        <authorList>
            <consortium name="US DOE Joint Genome Institute"/>
            <person name="Copeland A."/>
            <person name="Lucas S."/>
            <person name="Lapidus A."/>
            <person name="Barry K."/>
            <person name="Detter J.C."/>
            <person name="Glavina del Rio T."/>
            <person name="Hammon N."/>
            <person name="Israni S."/>
            <person name="Dalin E."/>
            <person name="Tice H."/>
            <person name="Pitluck S."/>
            <person name="Chain P."/>
            <person name="Malfatti S."/>
            <person name="Shin M."/>
            <person name="Vergez L."/>
            <person name="Schmutz J."/>
            <person name="Larimer F."/>
            <person name="Land M."/>
            <person name="Hauser L."/>
            <person name="Kyrpides N."/>
            <person name="Ivanova N."/>
            <person name="Tomasz A."/>
            <person name="Richardson P."/>
        </authorList>
    </citation>
    <scope>NUCLEOTIDE SEQUENCE [LARGE SCALE GENOMIC DNA]</scope>
    <source>
        <strain>JH1</strain>
    </source>
</reference>
<accession>A6U489</accession>
<name>HSSS_STAA2</name>
<feature type="chain" id="PRO_0000331339" description="Heme sensor protein HssS">
    <location>
        <begin position="1"/>
        <end position="457"/>
    </location>
</feature>
<feature type="transmembrane region" description="Helical" evidence="2">
    <location>
        <begin position="9"/>
        <end position="29"/>
    </location>
</feature>
<feature type="transmembrane region" description="Helical" evidence="2">
    <location>
        <begin position="164"/>
        <end position="184"/>
    </location>
</feature>
<feature type="domain" description="HAMP" evidence="3">
    <location>
        <begin position="186"/>
        <end position="238"/>
    </location>
</feature>
<feature type="domain" description="Histidine kinase" evidence="4">
    <location>
        <begin position="246"/>
        <end position="456"/>
    </location>
</feature>
<feature type="modified residue" description="Phosphohistidine; by autocatalysis" evidence="4">
    <location>
        <position position="249"/>
    </location>
</feature>
<sequence length="457" mass="52386">MFKTLYARIAIYSITVILFSALISFVLTNVYYHYNLKASNDAKIMKTLKEARQYEQSAKPTHIQQYFKHLGQMNYQIMTVDQKGHKTFYGEPFREDTLSQNAINNVLNNKDYHGIKDKPFALFVTGFFDNVTDNTVGINFKTKDGSIAVFMRPDIGETFSEFRTFLAVLLMLLLFISISLVIASTYSIIRPVKKLKLATERLIDGDFETPIKQTRKDEIGTLQYHFNKMRESLGQVDQMRQHFVQNVSHEIKTPLTHIHHLLSELQQTSDKTLRQQYINDIYTITTQLSGLTTELLLLSELDNHQHLLFDDKIQVDQLIKDIIRHEQFAADEKSLIILADLESINFLGNQRLLHQALSNLLINAIKYTDVGGAIDIALQHSHNNIIFTISNDGSPISPQAEARLFERFYKVSKHDNSNGLGLAITKSIIELHHGTIQFTQSNEYVTTFTITLPNNSH</sequence>
<comment type="function">
    <text evidence="1">Member of the two-component regulatory system HssS/HssR involved in intracellular heme homeostasis and tempering of staphylococcal virulence. HssS functions as a heme sensor histidine kinase which is autophosphorylated at a histidine residue and transfers its phosphate group to an aspartate residue of HssR. HssR/HssS activates the expression of hrtAB, an efflux pump, in response to extracellular heme, hemin, hemoglobin or blood (By similarity).</text>
</comment>
<comment type="catalytic activity">
    <reaction>
        <text>ATP + protein L-histidine = ADP + protein N-phospho-L-histidine.</text>
        <dbReference type="EC" id="2.7.13.3"/>
    </reaction>
</comment>
<comment type="subcellular location">
    <subcellularLocation>
        <location evidence="1">Cell membrane</location>
        <topology evidence="1">Multi-pass membrane protein</topology>
    </subcellularLocation>
</comment>
<comment type="PTM">
    <text evidence="1">Autophosphorylated.</text>
</comment>